<organism>
    <name type="scientific">Corynebacterium glutamicum (strain ATCC 13032 / DSM 20300 / JCM 1318 / BCRC 11384 / CCUG 27702 / LMG 3730 / NBRC 12168 / NCIMB 10025 / NRRL B-2784 / 534)</name>
    <dbReference type="NCBI Taxonomy" id="196627"/>
    <lineage>
        <taxon>Bacteria</taxon>
        <taxon>Bacillati</taxon>
        <taxon>Actinomycetota</taxon>
        <taxon>Actinomycetes</taxon>
        <taxon>Mycobacteriales</taxon>
        <taxon>Corynebacteriaceae</taxon>
        <taxon>Corynebacterium</taxon>
    </lineage>
</organism>
<protein>
    <recommendedName>
        <fullName evidence="1">4-diphosphocytidyl-2-C-methyl-D-erythritol kinase</fullName>
        <shortName evidence="1">CMK</shortName>
        <ecNumber evidence="1">2.7.1.148</ecNumber>
    </recommendedName>
    <alternativeName>
        <fullName evidence="1">4-(cytidine-5'-diphospho)-2-C-methyl-D-erythritol kinase</fullName>
    </alternativeName>
</protein>
<sequence length="311" mass="32630">MKITAKAWAKTNLHLGVGPAHDDGFHELMTVFQTIDLFDTVTLTTLDEELVEEGSVVKQLSVTGARGVPEDASNLAWRAVDALVKRRAEKTPLSAVSLHISKGIPVAGGMAGGSADAAATLRAVDAWIGPFGEDTLLEVAAELGSDVPFCLLGGTMRGTGRGEQLVDMLTRGKLHWVVAAMAHGLSTPEVFKKHDELNPESHMDISDLSAALLTGNTAEVGQWLHNDLTSAALSLRPELRSVLQEGIRSGAHAGIVSGSGPTTVFLCESEHKAQDVKEALIDAGQVYAAYTATGPAASTADQRGAHILTVS</sequence>
<keyword id="KW-0067">ATP-binding</keyword>
<keyword id="KW-0414">Isoprene biosynthesis</keyword>
<keyword id="KW-0418">Kinase</keyword>
<keyword id="KW-0547">Nucleotide-binding</keyword>
<keyword id="KW-1185">Reference proteome</keyword>
<keyword id="KW-0808">Transferase</keyword>
<accession>Q8NRY0</accession>
<reference key="1">
    <citation type="journal article" date="2003" name="Appl. Microbiol. Biotechnol.">
        <title>The Corynebacterium glutamicum genome: features and impacts on biotechnological processes.</title>
        <authorList>
            <person name="Ikeda M."/>
            <person name="Nakagawa S."/>
        </authorList>
    </citation>
    <scope>NUCLEOTIDE SEQUENCE [LARGE SCALE GENOMIC DNA]</scope>
    <source>
        <strain>ATCC 13032 / DSM 20300 / JCM 1318 / BCRC 11384 / CCUG 27702 / LMG 3730 / NBRC 12168 / NCIMB 10025 / NRRL B-2784 / 534</strain>
    </source>
</reference>
<reference key="2">
    <citation type="journal article" date="2003" name="J. Biotechnol.">
        <title>The complete Corynebacterium glutamicum ATCC 13032 genome sequence and its impact on the production of L-aspartate-derived amino acids and vitamins.</title>
        <authorList>
            <person name="Kalinowski J."/>
            <person name="Bathe B."/>
            <person name="Bartels D."/>
            <person name="Bischoff N."/>
            <person name="Bott M."/>
            <person name="Burkovski A."/>
            <person name="Dusch N."/>
            <person name="Eggeling L."/>
            <person name="Eikmanns B.J."/>
            <person name="Gaigalat L."/>
            <person name="Goesmann A."/>
            <person name="Hartmann M."/>
            <person name="Huthmacher K."/>
            <person name="Kraemer R."/>
            <person name="Linke B."/>
            <person name="McHardy A.C."/>
            <person name="Meyer F."/>
            <person name="Moeckel B."/>
            <person name="Pfefferle W."/>
            <person name="Puehler A."/>
            <person name="Rey D.A."/>
            <person name="Rueckert C."/>
            <person name="Rupp O."/>
            <person name="Sahm H."/>
            <person name="Wendisch V.F."/>
            <person name="Wiegraebe I."/>
            <person name="Tauch A."/>
        </authorList>
    </citation>
    <scope>NUCLEOTIDE SEQUENCE [LARGE SCALE GENOMIC DNA]</scope>
    <source>
        <strain>ATCC 13032 / DSM 20300 / JCM 1318 / BCRC 11384 / CCUG 27702 / LMG 3730 / NBRC 12168 / NCIMB 10025 / NRRL B-2784 / 534</strain>
    </source>
</reference>
<feature type="chain" id="PRO_0000189212" description="4-diphosphocytidyl-2-C-methyl-D-erythritol kinase">
    <location>
        <begin position="1"/>
        <end position="311"/>
    </location>
</feature>
<feature type="active site" evidence="1">
    <location>
        <position position="10"/>
    </location>
</feature>
<feature type="active site" evidence="1">
    <location>
        <position position="146"/>
    </location>
</feature>
<feature type="binding site" evidence="1">
    <location>
        <begin position="105"/>
        <end position="115"/>
    </location>
    <ligand>
        <name>ATP</name>
        <dbReference type="ChEBI" id="CHEBI:30616"/>
    </ligand>
</feature>
<gene>
    <name evidence="1" type="primary">ispE</name>
    <name type="ordered locus">Cgl0911</name>
    <name type="ordered locus">cg1039</name>
</gene>
<dbReference type="EC" id="2.7.1.148" evidence="1"/>
<dbReference type="EMBL" id="BA000036">
    <property type="protein sequence ID" value="BAB98304.1"/>
    <property type="molecule type" value="Genomic_DNA"/>
</dbReference>
<dbReference type="EMBL" id="BX927150">
    <property type="protein sequence ID" value="CAF19617.1"/>
    <property type="molecule type" value="Genomic_DNA"/>
</dbReference>
<dbReference type="RefSeq" id="NP_600139.1">
    <property type="nucleotide sequence ID" value="NC_003450.3"/>
</dbReference>
<dbReference type="RefSeq" id="WP_011013967.1">
    <property type="nucleotide sequence ID" value="NC_006958.1"/>
</dbReference>
<dbReference type="SMR" id="Q8NRY0"/>
<dbReference type="STRING" id="196627.cg1039"/>
<dbReference type="KEGG" id="cgb:cg1039"/>
<dbReference type="KEGG" id="cgl:Cgl0911"/>
<dbReference type="PATRIC" id="fig|196627.13.peg.896"/>
<dbReference type="eggNOG" id="COG1947">
    <property type="taxonomic scope" value="Bacteria"/>
</dbReference>
<dbReference type="HOGENOM" id="CLU_053057_1_1_11"/>
<dbReference type="OrthoDB" id="3173073at2"/>
<dbReference type="BioCyc" id="CORYNE:G18NG-10481-MONOMER"/>
<dbReference type="UniPathway" id="UPA00056">
    <property type="reaction ID" value="UER00094"/>
</dbReference>
<dbReference type="Proteomes" id="UP000000582">
    <property type="component" value="Chromosome"/>
</dbReference>
<dbReference type="Proteomes" id="UP000001009">
    <property type="component" value="Chromosome"/>
</dbReference>
<dbReference type="GO" id="GO:0050515">
    <property type="term" value="F:4-(cytidine 5'-diphospho)-2-C-methyl-D-erythritol kinase activity"/>
    <property type="evidence" value="ECO:0007669"/>
    <property type="project" value="UniProtKB-UniRule"/>
</dbReference>
<dbReference type="GO" id="GO:0005524">
    <property type="term" value="F:ATP binding"/>
    <property type="evidence" value="ECO:0007669"/>
    <property type="project" value="UniProtKB-UniRule"/>
</dbReference>
<dbReference type="GO" id="GO:0019288">
    <property type="term" value="P:isopentenyl diphosphate biosynthetic process, methylerythritol 4-phosphate pathway"/>
    <property type="evidence" value="ECO:0007669"/>
    <property type="project" value="UniProtKB-UniRule"/>
</dbReference>
<dbReference type="GO" id="GO:0016114">
    <property type="term" value="P:terpenoid biosynthetic process"/>
    <property type="evidence" value="ECO:0007669"/>
    <property type="project" value="InterPro"/>
</dbReference>
<dbReference type="Gene3D" id="3.30.230.10">
    <property type="match status" value="1"/>
</dbReference>
<dbReference type="Gene3D" id="3.30.70.890">
    <property type="entry name" value="GHMP kinase, C-terminal domain"/>
    <property type="match status" value="1"/>
</dbReference>
<dbReference type="HAMAP" id="MF_00061">
    <property type="entry name" value="IspE"/>
    <property type="match status" value="1"/>
</dbReference>
<dbReference type="InterPro" id="IPR013750">
    <property type="entry name" value="GHMP_kinase_C_dom"/>
</dbReference>
<dbReference type="InterPro" id="IPR036554">
    <property type="entry name" value="GHMP_kinase_C_sf"/>
</dbReference>
<dbReference type="InterPro" id="IPR006204">
    <property type="entry name" value="GHMP_kinase_N_dom"/>
</dbReference>
<dbReference type="InterPro" id="IPR004424">
    <property type="entry name" value="IspE"/>
</dbReference>
<dbReference type="InterPro" id="IPR020568">
    <property type="entry name" value="Ribosomal_Su5_D2-typ_SF"/>
</dbReference>
<dbReference type="InterPro" id="IPR014721">
    <property type="entry name" value="Ribsml_uS5_D2-typ_fold_subgr"/>
</dbReference>
<dbReference type="NCBIfam" id="TIGR00154">
    <property type="entry name" value="ispE"/>
    <property type="match status" value="1"/>
</dbReference>
<dbReference type="NCBIfam" id="NF002870">
    <property type="entry name" value="PRK03188.1"/>
    <property type="match status" value="1"/>
</dbReference>
<dbReference type="PANTHER" id="PTHR43527">
    <property type="entry name" value="4-DIPHOSPHOCYTIDYL-2-C-METHYL-D-ERYTHRITOL KINASE, CHLOROPLASTIC"/>
    <property type="match status" value="1"/>
</dbReference>
<dbReference type="PANTHER" id="PTHR43527:SF2">
    <property type="entry name" value="4-DIPHOSPHOCYTIDYL-2-C-METHYL-D-ERYTHRITOL KINASE, CHLOROPLASTIC"/>
    <property type="match status" value="1"/>
</dbReference>
<dbReference type="Pfam" id="PF08544">
    <property type="entry name" value="GHMP_kinases_C"/>
    <property type="match status" value="1"/>
</dbReference>
<dbReference type="Pfam" id="PF00288">
    <property type="entry name" value="GHMP_kinases_N"/>
    <property type="match status" value="1"/>
</dbReference>
<dbReference type="PIRSF" id="PIRSF010376">
    <property type="entry name" value="IspE"/>
    <property type="match status" value="1"/>
</dbReference>
<dbReference type="SUPFAM" id="SSF55060">
    <property type="entry name" value="GHMP Kinase, C-terminal domain"/>
    <property type="match status" value="1"/>
</dbReference>
<dbReference type="SUPFAM" id="SSF54211">
    <property type="entry name" value="Ribosomal protein S5 domain 2-like"/>
    <property type="match status" value="1"/>
</dbReference>
<comment type="function">
    <text evidence="1">Catalyzes the phosphorylation of the position 2 hydroxy group of 4-diphosphocytidyl-2C-methyl-D-erythritol.</text>
</comment>
<comment type="catalytic activity">
    <reaction evidence="1">
        <text>4-CDP-2-C-methyl-D-erythritol + ATP = 4-CDP-2-C-methyl-D-erythritol 2-phosphate + ADP + H(+)</text>
        <dbReference type="Rhea" id="RHEA:18437"/>
        <dbReference type="ChEBI" id="CHEBI:15378"/>
        <dbReference type="ChEBI" id="CHEBI:30616"/>
        <dbReference type="ChEBI" id="CHEBI:57823"/>
        <dbReference type="ChEBI" id="CHEBI:57919"/>
        <dbReference type="ChEBI" id="CHEBI:456216"/>
        <dbReference type="EC" id="2.7.1.148"/>
    </reaction>
</comment>
<comment type="pathway">
    <text evidence="1">Isoprenoid biosynthesis; isopentenyl diphosphate biosynthesis via DXP pathway; isopentenyl diphosphate from 1-deoxy-D-xylulose 5-phosphate: step 3/6.</text>
</comment>
<comment type="similarity">
    <text evidence="1">Belongs to the GHMP kinase family. IspE subfamily.</text>
</comment>
<name>ISPE_CORGL</name>
<proteinExistence type="inferred from homology"/>
<evidence type="ECO:0000255" key="1">
    <source>
        <dbReference type="HAMAP-Rule" id="MF_00061"/>
    </source>
</evidence>